<keyword id="KW-0997">Cell inner membrane</keyword>
<keyword id="KW-1003">Cell membrane</keyword>
<keyword id="KW-0378">Hydrolase</keyword>
<keyword id="KW-0472">Membrane</keyword>
<keyword id="KW-0479">Metal-binding</keyword>
<keyword id="KW-0482">Metalloprotease</keyword>
<keyword id="KW-0645">Protease</keyword>
<keyword id="KW-1185">Reference proteome</keyword>
<keyword id="KW-0812">Transmembrane</keyword>
<keyword id="KW-1133">Transmembrane helix</keyword>
<keyword id="KW-0862">Zinc</keyword>
<organism>
    <name type="scientific">Escherichia coli O127:H6 (strain E2348/69 / EPEC)</name>
    <dbReference type="NCBI Taxonomy" id="574521"/>
    <lineage>
        <taxon>Bacteria</taxon>
        <taxon>Pseudomonadati</taxon>
        <taxon>Pseudomonadota</taxon>
        <taxon>Gammaproteobacteria</taxon>
        <taxon>Enterobacterales</taxon>
        <taxon>Enterobacteriaceae</taxon>
        <taxon>Escherichia</taxon>
    </lineage>
</organism>
<protein>
    <recommendedName>
        <fullName evidence="1">Protease HtpX</fullName>
        <ecNumber evidence="1">3.4.24.-</ecNumber>
    </recommendedName>
    <alternativeName>
        <fullName evidence="1">Heat shock protein HtpX</fullName>
    </alternativeName>
</protein>
<accession>B7USK6</accession>
<feature type="chain" id="PRO_1000124227" description="Protease HtpX">
    <location>
        <begin position="1"/>
        <end position="293"/>
    </location>
</feature>
<feature type="transmembrane region" description="Helical" evidence="1">
    <location>
        <begin position="4"/>
        <end position="24"/>
    </location>
</feature>
<feature type="transmembrane region" description="Helical" evidence="1">
    <location>
        <begin position="34"/>
        <end position="54"/>
    </location>
</feature>
<feature type="transmembrane region" description="Helical" evidence="1">
    <location>
        <begin position="158"/>
        <end position="178"/>
    </location>
</feature>
<feature type="transmembrane region" description="Helical" evidence="1">
    <location>
        <begin position="193"/>
        <end position="213"/>
    </location>
</feature>
<feature type="active site" evidence="1">
    <location>
        <position position="140"/>
    </location>
</feature>
<feature type="binding site" evidence="1">
    <location>
        <position position="139"/>
    </location>
    <ligand>
        <name>Zn(2+)</name>
        <dbReference type="ChEBI" id="CHEBI:29105"/>
        <note>catalytic</note>
    </ligand>
</feature>
<feature type="binding site" evidence="1">
    <location>
        <position position="143"/>
    </location>
    <ligand>
        <name>Zn(2+)</name>
        <dbReference type="ChEBI" id="CHEBI:29105"/>
        <note>catalytic</note>
    </ligand>
</feature>
<feature type="binding site" evidence="1">
    <location>
        <position position="222"/>
    </location>
    <ligand>
        <name>Zn(2+)</name>
        <dbReference type="ChEBI" id="CHEBI:29105"/>
        <note>catalytic</note>
    </ligand>
</feature>
<sequence>MMRIALFLLTNLAVMVVFGLVLSLTGIQSSSVQGLMIMALLFGFGGSFVSLLMSKWMALRSVGGEVIEQPRNERERWLVNTVATQACQAGIAMPQVAIYHAPDINAFATGARRDASLVAVSTGLLQNMSPDEAEAVIAHEISHIANGDMVTMTLIQGVVNTFVIFISRILAQLAAGFMGGNRDEGEESNGNPLIYFAVATVLELVFGILASIITMWFSRHREFHADAGSAKLVGREKMIAALQRLKTSYEPQEATSMMAFCINGKSKSLSELFMTHPPLDKRIEALRTGEYLK</sequence>
<comment type="cofactor">
    <cofactor evidence="1">
        <name>Zn(2+)</name>
        <dbReference type="ChEBI" id="CHEBI:29105"/>
    </cofactor>
    <text evidence="1">Binds 1 zinc ion per subunit.</text>
</comment>
<comment type="subcellular location">
    <subcellularLocation>
        <location evidence="1">Cell inner membrane</location>
        <topology evidence="1">Multi-pass membrane protein</topology>
    </subcellularLocation>
</comment>
<comment type="similarity">
    <text evidence="1">Belongs to the peptidase M48B family.</text>
</comment>
<gene>
    <name evidence="1" type="primary">htpX</name>
    <name type="ordered locus">E2348C_1954</name>
</gene>
<proteinExistence type="inferred from homology"/>
<reference key="1">
    <citation type="journal article" date="2009" name="J. Bacteriol.">
        <title>Complete genome sequence and comparative genome analysis of enteropathogenic Escherichia coli O127:H6 strain E2348/69.</title>
        <authorList>
            <person name="Iguchi A."/>
            <person name="Thomson N.R."/>
            <person name="Ogura Y."/>
            <person name="Saunders D."/>
            <person name="Ooka T."/>
            <person name="Henderson I.R."/>
            <person name="Harris D."/>
            <person name="Asadulghani M."/>
            <person name="Kurokawa K."/>
            <person name="Dean P."/>
            <person name="Kenny B."/>
            <person name="Quail M.A."/>
            <person name="Thurston S."/>
            <person name="Dougan G."/>
            <person name="Hayashi T."/>
            <person name="Parkhill J."/>
            <person name="Frankel G."/>
        </authorList>
    </citation>
    <scope>NUCLEOTIDE SEQUENCE [LARGE SCALE GENOMIC DNA]</scope>
    <source>
        <strain>E2348/69 / EPEC</strain>
    </source>
</reference>
<dbReference type="EC" id="3.4.24.-" evidence="1"/>
<dbReference type="EMBL" id="FM180568">
    <property type="protein sequence ID" value="CAS09502.1"/>
    <property type="molecule type" value="Genomic_DNA"/>
</dbReference>
<dbReference type="RefSeq" id="WP_000984504.1">
    <property type="nucleotide sequence ID" value="NC_011601.1"/>
</dbReference>
<dbReference type="SMR" id="B7USK6"/>
<dbReference type="MEROPS" id="M48.002"/>
<dbReference type="KEGG" id="ecg:E2348C_1954"/>
<dbReference type="HOGENOM" id="CLU_042266_1_0_6"/>
<dbReference type="Proteomes" id="UP000008205">
    <property type="component" value="Chromosome"/>
</dbReference>
<dbReference type="GO" id="GO:0005886">
    <property type="term" value="C:plasma membrane"/>
    <property type="evidence" value="ECO:0007669"/>
    <property type="project" value="UniProtKB-SubCell"/>
</dbReference>
<dbReference type="GO" id="GO:0004222">
    <property type="term" value="F:metalloendopeptidase activity"/>
    <property type="evidence" value="ECO:0007669"/>
    <property type="project" value="UniProtKB-UniRule"/>
</dbReference>
<dbReference type="GO" id="GO:0008270">
    <property type="term" value="F:zinc ion binding"/>
    <property type="evidence" value="ECO:0007669"/>
    <property type="project" value="UniProtKB-UniRule"/>
</dbReference>
<dbReference type="GO" id="GO:0006508">
    <property type="term" value="P:proteolysis"/>
    <property type="evidence" value="ECO:0007669"/>
    <property type="project" value="UniProtKB-KW"/>
</dbReference>
<dbReference type="CDD" id="cd07335">
    <property type="entry name" value="M48B_HtpX_like"/>
    <property type="match status" value="1"/>
</dbReference>
<dbReference type="FunFam" id="3.30.2010.10:FF:000001">
    <property type="entry name" value="Protease HtpX"/>
    <property type="match status" value="1"/>
</dbReference>
<dbReference type="Gene3D" id="3.30.2010.10">
    <property type="entry name" value="Metalloproteases ('zincins'), catalytic domain"/>
    <property type="match status" value="1"/>
</dbReference>
<dbReference type="HAMAP" id="MF_00188">
    <property type="entry name" value="Pept_M48_protease_HtpX"/>
    <property type="match status" value="1"/>
</dbReference>
<dbReference type="InterPro" id="IPR050083">
    <property type="entry name" value="HtpX_protease"/>
</dbReference>
<dbReference type="InterPro" id="IPR022919">
    <property type="entry name" value="Pept_M48_protease_HtpX"/>
</dbReference>
<dbReference type="InterPro" id="IPR001915">
    <property type="entry name" value="Peptidase_M48"/>
</dbReference>
<dbReference type="NCBIfam" id="NF003965">
    <property type="entry name" value="PRK05457.1"/>
    <property type="match status" value="1"/>
</dbReference>
<dbReference type="PANTHER" id="PTHR43221">
    <property type="entry name" value="PROTEASE HTPX"/>
    <property type="match status" value="1"/>
</dbReference>
<dbReference type="PANTHER" id="PTHR43221:SF1">
    <property type="entry name" value="PROTEASE HTPX"/>
    <property type="match status" value="1"/>
</dbReference>
<dbReference type="Pfam" id="PF01435">
    <property type="entry name" value="Peptidase_M48"/>
    <property type="match status" value="1"/>
</dbReference>
<name>HTPX_ECO27</name>
<evidence type="ECO:0000255" key="1">
    <source>
        <dbReference type="HAMAP-Rule" id="MF_00188"/>
    </source>
</evidence>